<proteinExistence type="inferred from homology"/>
<comment type="function">
    <text evidence="1">An essential GTPase which binds GTP, GDP and possibly (p)ppGpp with moderate affinity, with high nucleotide exchange rates and a fairly low GTP hydrolysis rate. Plays a role in control of the cell cycle, stress response, ribosome biogenesis and in those bacteria that undergo differentiation, in morphogenesis control.</text>
</comment>
<comment type="cofactor">
    <cofactor evidence="1">
        <name>Mg(2+)</name>
        <dbReference type="ChEBI" id="CHEBI:18420"/>
    </cofactor>
</comment>
<comment type="subunit">
    <text evidence="1">Monomer.</text>
</comment>
<comment type="subcellular location">
    <subcellularLocation>
        <location evidence="1">Cytoplasm</location>
    </subcellularLocation>
</comment>
<comment type="similarity">
    <text evidence="1">Belongs to the TRAFAC class OBG-HflX-like GTPase superfamily. OBG GTPase family.</text>
</comment>
<organism>
    <name type="scientific">Prochlorococcus marinus (strain AS9601)</name>
    <dbReference type="NCBI Taxonomy" id="146891"/>
    <lineage>
        <taxon>Bacteria</taxon>
        <taxon>Bacillati</taxon>
        <taxon>Cyanobacteriota</taxon>
        <taxon>Cyanophyceae</taxon>
        <taxon>Synechococcales</taxon>
        <taxon>Prochlorococcaceae</taxon>
        <taxon>Prochlorococcus</taxon>
    </lineage>
</organism>
<evidence type="ECO:0000255" key="1">
    <source>
        <dbReference type="HAMAP-Rule" id="MF_01454"/>
    </source>
</evidence>
<evidence type="ECO:0000255" key="2">
    <source>
        <dbReference type="PROSITE-ProRule" id="PRU01231"/>
    </source>
</evidence>
<feature type="chain" id="PRO_0000386132" description="GTPase Obg">
    <location>
        <begin position="1"/>
        <end position="327"/>
    </location>
</feature>
<feature type="domain" description="Obg" evidence="2">
    <location>
        <begin position="1"/>
        <end position="159"/>
    </location>
</feature>
<feature type="domain" description="OBG-type G" evidence="1">
    <location>
        <begin position="160"/>
        <end position="327"/>
    </location>
</feature>
<feature type="binding site" evidence="1">
    <location>
        <begin position="166"/>
        <end position="173"/>
    </location>
    <ligand>
        <name>ATP</name>
        <dbReference type="ChEBI" id="CHEBI:30616"/>
    </ligand>
</feature>
<feature type="binding site" evidence="1">
    <location>
        <position position="173"/>
    </location>
    <ligand>
        <name>Mg(2+)</name>
        <dbReference type="ChEBI" id="CHEBI:18420"/>
    </ligand>
</feature>
<feature type="binding site" evidence="1">
    <location>
        <begin position="191"/>
        <end position="195"/>
    </location>
    <ligand>
        <name>ATP</name>
        <dbReference type="ChEBI" id="CHEBI:30616"/>
    </ligand>
</feature>
<feature type="binding site" evidence="1">
    <location>
        <position position="193"/>
    </location>
    <ligand>
        <name>Mg(2+)</name>
        <dbReference type="ChEBI" id="CHEBI:18420"/>
    </ligand>
</feature>
<feature type="binding site" evidence="1">
    <location>
        <begin position="213"/>
        <end position="216"/>
    </location>
    <ligand>
        <name>ATP</name>
        <dbReference type="ChEBI" id="CHEBI:30616"/>
    </ligand>
</feature>
<feature type="binding site" evidence="1">
    <location>
        <begin position="280"/>
        <end position="283"/>
    </location>
    <ligand>
        <name>ATP</name>
        <dbReference type="ChEBI" id="CHEBI:30616"/>
    </ligand>
</feature>
<feature type="binding site" evidence="1">
    <location>
        <begin position="309"/>
        <end position="311"/>
    </location>
    <ligand>
        <name>ATP</name>
        <dbReference type="ChEBI" id="CHEBI:30616"/>
    </ligand>
</feature>
<protein>
    <recommendedName>
        <fullName evidence="1">GTPase Obg</fullName>
        <ecNumber evidence="1">3.6.5.-</ecNumber>
    </recommendedName>
    <alternativeName>
        <fullName evidence="1">GTP-binding protein Obg</fullName>
    </alternativeName>
</protein>
<sequence length="327" mass="35296">MQFIDQANIILKAGKGGNGIVSFRREKFVPAGGPSGGNGGRGGSVILMADNNLQTLLDFKFKREIIAEDGCKGGPNKRSGASGEDTILKVPCGTEIRDIKTGIILGDLTKHKQSLTIAIGGRGGHGNAYYLSNQNRAPESFTEGKDGEIWEVQLELKLLAEVGIIGLPNAGKSTLISVVSSARPKIANYPFTTLIPNLGVVRKIDGNGCLFADIPGLISGAADGVGLGHDFLRHIQRTKILVHLIDAIAENPLHDFEIIEQELKKYGKGLLDKERIIVLNKIELVDDDYLKIISKKLEDLSKKKVLVISSSLKKGLSSLLSEVWKRI</sequence>
<dbReference type="EC" id="3.6.5.-" evidence="1"/>
<dbReference type="EMBL" id="CP000551">
    <property type="protein sequence ID" value="ABM69526.1"/>
    <property type="molecule type" value="Genomic_DNA"/>
</dbReference>
<dbReference type="RefSeq" id="WP_011817711.1">
    <property type="nucleotide sequence ID" value="NC_008816.1"/>
</dbReference>
<dbReference type="SMR" id="A2BP15"/>
<dbReference type="STRING" id="146891.A9601_02381"/>
<dbReference type="KEGG" id="pmb:A9601_02381"/>
<dbReference type="eggNOG" id="COG0536">
    <property type="taxonomic scope" value="Bacteria"/>
</dbReference>
<dbReference type="HOGENOM" id="CLU_011747_2_0_3"/>
<dbReference type="OrthoDB" id="9807318at2"/>
<dbReference type="Proteomes" id="UP000002590">
    <property type="component" value="Chromosome"/>
</dbReference>
<dbReference type="GO" id="GO:0005737">
    <property type="term" value="C:cytoplasm"/>
    <property type="evidence" value="ECO:0007669"/>
    <property type="project" value="UniProtKB-SubCell"/>
</dbReference>
<dbReference type="GO" id="GO:0005524">
    <property type="term" value="F:ATP binding"/>
    <property type="evidence" value="ECO:0007669"/>
    <property type="project" value="UniProtKB-KW"/>
</dbReference>
<dbReference type="GO" id="GO:0005525">
    <property type="term" value="F:GTP binding"/>
    <property type="evidence" value="ECO:0007669"/>
    <property type="project" value="UniProtKB-UniRule"/>
</dbReference>
<dbReference type="GO" id="GO:0003924">
    <property type="term" value="F:GTPase activity"/>
    <property type="evidence" value="ECO:0007669"/>
    <property type="project" value="UniProtKB-UniRule"/>
</dbReference>
<dbReference type="GO" id="GO:0000287">
    <property type="term" value="F:magnesium ion binding"/>
    <property type="evidence" value="ECO:0007669"/>
    <property type="project" value="InterPro"/>
</dbReference>
<dbReference type="GO" id="GO:0042254">
    <property type="term" value="P:ribosome biogenesis"/>
    <property type="evidence" value="ECO:0007669"/>
    <property type="project" value="UniProtKB-UniRule"/>
</dbReference>
<dbReference type="CDD" id="cd01898">
    <property type="entry name" value="Obg"/>
    <property type="match status" value="1"/>
</dbReference>
<dbReference type="FunFam" id="2.70.210.12:FF:000001">
    <property type="entry name" value="GTPase Obg"/>
    <property type="match status" value="1"/>
</dbReference>
<dbReference type="Gene3D" id="2.70.210.12">
    <property type="entry name" value="GTP1/OBG domain"/>
    <property type="match status" value="1"/>
</dbReference>
<dbReference type="Gene3D" id="3.40.50.300">
    <property type="entry name" value="P-loop containing nucleotide triphosphate hydrolases"/>
    <property type="match status" value="1"/>
</dbReference>
<dbReference type="HAMAP" id="MF_01454">
    <property type="entry name" value="GTPase_Obg"/>
    <property type="match status" value="1"/>
</dbReference>
<dbReference type="InterPro" id="IPR031167">
    <property type="entry name" value="G_OBG"/>
</dbReference>
<dbReference type="InterPro" id="IPR006073">
    <property type="entry name" value="GTP-bd"/>
</dbReference>
<dbReference type="InterPro" id="IPR014100">
    <property type="entry name" value="GTP-bd_Obg/CgtA"/>
</dbReference>
<dbReference type="InterPro" id="IPR006169">
    <property type="entry name" value="GTP1_OBG_dom"/>
</dbReference>
<dbReference type="InterPro" id="IPR036726">
    <property type="entry name" value="GTP1_OBG_dom_sf"/>
</dbReference>
<dbReference type="InterPro" id="IPR045086">
    <property type="entry name" value="OBG_GTPase"/>
</dbReference>
<dbReference type="InterPro" id="IPR027417">
    <property type="entry name" value="P-loop_NTPase"/>
</dbReference>
<dbReference type="NCBIfam" id="TIGR02729">
    <property type="entry name" value="Obg_CgtA"/>
    <property type="match status" value="1"/>
</dbReference>
<dbReference type="NCBIfam" id="NF008955">
    <property type="entry name" value="PRK12297.1"/>
    <property type="match status" value="1"/>
</dbReference>
<dbReference type="NCBIfam" id="NF008956">
    <property type="entry name" value="PRK12299.1"/>
    <property type="match status" value="1"/>
</dbReference>
<dbReference type="PANTHER" id="PTHR11702">
    <property type="entry name" value="DEVELOPMENTALLY REGULATED GTP-BINDING PROTEIN-RELATED"/>
    <property type="match status" value="1"/>
</dbReference>
<dbReference type="PANTHER" id="PTHR11702:SF31">
    <property type="entry name" value="MITOCHONDRIAL RIBOSOME-ASSOCIATED GTPASE 2"/>
    <property type="match status" value="1"/>
</dbReference>
<dbReference type="Pfam" id="PF01018">
    <property type="entry name" value="GTP1_OBG"/>
    <property type="match status" value="1"/>
</dbReference>
<dbReference type="Pfam" id="PF01926">
    <property type="entry name" value="MMR_HSR1"/>
    <property type="match status" value="1"/>
</dbReference>
<dbReference type="PIRSF" id="PIRSF002401">
    <property type="entry name" value="GTP_bd_Obg/CgtA"/>
    <property type="match status" value="1"/>
</dbReference>
<dbReference type="PRINTS" id="PR00326">
    <property type="entry name" value="GTP1OBG"/>
</dbReference>
<dbReference type="SUPFAM" id="SSF82051">
    <property type="entry name" value="Obg GTP-binding protein N-terminal domain"/>
    <property type="match status" value="1"/>
</dbReference>
<dbReference type="SUPFAM" id="SSF52540">
    <property type="entry name" value="P-loop containing nucleoside triphosphate hydrolases"/>
    <property type="match status" value="1"/>
</dbReference>
<dbReference type="PROSITE" id="PS51710">
    <property type="entry name" value="G_OBG"/>
    <property type="match status" value="1"/>
</dbReference>
<dbReference type="PROSITE" id="PS51883">
    <property type="entry name" value="OBG"/>
    <property type="match status" value="1"/>
</dbReference>
<keyword id="KW-0067">ATP-binding</keyword>
<keyword id="KW-0963">Cytoplasm</keyword>
<keyword id="KW-0342">GTP-binding</keyword>
<keyword id="KW-0378">Hydrolase</keyword>
<keyword id="KW-0460">Magnesium</keyword>
<keyword id="KW-0479">Metal-binding</keyword>
<keyword id="KW-0547">Nucleotide-binding</keyword>
<reference key="1">
    <citation type="journal article" date="2007" name="PLoS Genet.">
        <title>Patterns and implications of gene gain and loss in the evolution of Prochlorococcus.</title>
        <authorList>
            <person name="Kettler G.C."/>
            <person name="Martiny A.C."/>
            <person name="Huang K."/>
            <person name="Zucker J."/>
            <person name="Coleman M.L."/>
            <person name="Rodrigue S."/>
            <person name="Chen F."/>
            <person name="Lapidus A."/>
            <person name="Ferriera S."/>
            <person name="Johnson J."/>
            <person name="Steglich C."/>
            <person name="Church G.M."/>
            <person name="Richardson P."/>
            <person name="Chisholm S.W."/>
        </authorList>
    </citation>
    <scope>NUCLEOTIDE SEQUENCE [LARGE SCALE GENOMIC DNA]</scope>
    <source>
        <strain>AS9601</strain>
    </source>
</reference>
<accession>A2BP15</accession>
<name>OBG_PROMS</name>
<gene>
    <name evidence="1" type="primary">obg</name>
    <name type="ordered locus">A9601_02381</name>
</gene>